<reference key="1">
    <citation type="journal article" date="2004" name="Nat. Genet.">
        <title>Complete sequencing and characterization of 21,243 full-length human cDNAs.</title>
        <authorList>
            <person name="Ota T."/>
            <person name="Suzuki Y."/>
            <person name="Nishikawa T."/>
            <person name="Otsuki T."/>
            <person name="Sugiyama T."/>
            <person name="Irie R."/>
            <person name="Wakamatsu A."/>
            <person name="Hayashi K."/>
            <person name="Sato H."/>
            <person name="Nagai K."/>
            <person name="Kimura K."/>
            <person name="Makita H."/>
            <person name="Sekine M."/>
            <person name="Obayashi M."/>
            <person name="Nishi T."/>
            <person name="Shibahara T."/>
            <person name="Tanaka T."/>
            <person name="Ishii S."/>
            <person name="Yamamoto J."/>
            <person name="Saito K."/>
            <person name="Kawai Y."/>
            <person name="Isono Y."/>
            <person name="Nakamura Y."/>
            <person name="Nagahari K."/>
            <person name="Murakami K."/>
            <person name="Yasuda T."/>
            <person name="Iwayanagi T."/>
            <person name="Wagatsuma M."/>
            <person name="Shiratori A."/>
            <person name="Sudo H."/>
            <person name="Hosoiri T."/>
            <person name="Kaku Y."/>
            <person name="Kodaira H."/>
            <person name="Kondo H."/>
            <person name="Sugawara M."/>
            <person name="Takahashi M."/>
            <person name="Kanda K."/>
            <person name="Yokoi T."/>
            <person name="Furuya T."/>
            <person name="Kikkawa E."/>
            <person name="Omura Y."/>
            <person name="Abe K."/>
            <person name="Kamihara K."/>
            <person name="Katsuta N."/>
            <person name="Sato K."/>
            <person name="Tanikawa M."/>
            <person name="Yamazaki M."/>
            <person name="Ninomiya K."/>
            <person name="Ishibashi T."/>
            <person name="Yamashita H."/>
            <person name="Murakawa K."/>
            <person name="Fujimori K."/>
            <person name="Tanai H."/>
            <person name="Kimata M."/>
            <person name="Watanabe M."/>
            <person name="Hiraoka S."/>
            <person name="Chiba Y."/>
            <person name="Ishida S."/>
            <person name="Ono Y."/>
            <person name="Takiguchi S."/>
            <person name="Watanabe S."/>
            <person name="Yosida M."/>
            <person name="Hotuta T."/>
            <person name="Kusano J."/>
            <person name="Kanehori K."/>
            <person name="Takahashi-Fujii A."/>
            <person name="Hara H."/>
            <person name="Tanase T.-O."/>
            <person name="Nomura Y."/>
            <person name="Togiya S."/>
            <person name="Komai F."/>
            <person name="Hara R."/>
            <person name="Takeuchi K."/>
            <person name="Arita M."/>
            <person name="Imose N."/>
            <person name="Musashino K."/>
            <person name="Yuuki H."/>
            <person name="Oshima A."/>
            <person name="Sasaki N."/>
            <person name="Aotsuka S."/>
            <person name="Yoshikawa Y."/>
            <person name="Matsunawa H."/>
            <person name="Ichihara T."/>
            <person name="Shiohata N."/>
            <person name="Sano S."/>
            <person name="Moriya S."/>
            <person name="Momiyama H."/>
            <person name="Satoh N."/>
            <person name="Takami S."/>
            <person name="Terashima Y."/>
            <person name="Suzuki O."/>
            <person name="Nakagawa S."/>
            <person name="Senoh A."/>
            <person name="Mizoguchi H."/>
            <person name="Goto Y."/>
            <person name="Shimizu F."/>
            <person name="Wakebe H."/>
            <person name="Hishigaki H."/>
            <person name="Watanabe T."/>
            <person name="Sugiyama A."/>
            <person name="Takemoto M."/>
            <person name="Kawakami B."/>
            <person name="Yamazaki M."/>
            <person name="Watanabe K."/>
            <person name="Kumagai A."/>
            <person name="Itakura S."/>
            <person name="Fukuzumi Y."/>
            <person name="Fujimori Y."/>
            <person name="Komiyama M."/>
            <person name="Tashiro H."/>
            <person name="Tanigami A."/>
            <person name="Fujiwara T."/>
            <person name="Ono T."/>
            <person name="Yamada K."/>
            <person name="Fujii Y."/>
            <person name="Ozaki K."/>
            <person name="Hirao M."/>
            <person name="Ohmori Y."/>
            <person name="Kawabata A."/>
            <person name="Hikiji T."/>
            <person name="Kobatake N."/>
            <person name="Inagaki H."/>
            <person name="Ikema Y."/>
            <person name="Okamoto S."/>
            <person name="Okitani R."/>
            <person name="Kawakami T."/>
            <person name="Noguchi S."/>
            <person name="Itoh T."/>
            <person name="Shigeta K."/>
            <person name="Senba T."/>
            <person name="Matsumura K."/>
            <person name="Nakajima Y."/>
            <person name="Mizuno T."/>
            <person name="Morinaga M."/>
            <person name="Sasaki M."/>
            <person name="Togashi T."/>
            <person name="Oyama M."/>
            <person name="Hata H."/>
            <person name="Watanabe M."/>
            <person name="Komatsu T."/>
            <person name="Mizushima-Sugano J."/>
            <person name="Satoh T."/>
            <person name="Shirai Y."/>
            <person name="Takahashi Y."/>
            <person name="Nakagawa K."/>
            <person name="Okumura K."/>
            <person name="Nagase T."/>
            <person name="Nomura N."/>
            <person name="Kikuchi H."/>
            <person name="Masuho Y."/>
            <person name="Yamashita R."/>
            <person name="Nakai K."/>
            <person name="Yada T."/>
            <person name="Nakamura Y."/>
            <person name="Ohara O."/>
            <person name="Isogai T."/>
            <person name="Sugano S."/>
        </authorList>
    </citation>
    <scope>NUCLEOTIDE SEQUENCE [LARGE SCALE MRNA] (ISOFORM 1)</scope>
    <source>
        <tissue>Ovary</tissue>
        <tissue>Testis</tissue>
    </source>
</reference>
<reference key="2">
    <citation type="journal article" date="2007" name="BMC Genomics">
        <title>The full-ORF clone resource of the German cDNA consortium.</title>
        <authorList>
            <person name="Bechtel S."/>
            <person name="Rosenfelder H."/>
            <person name="Duda A."/>
            <person name="Schmidt C.P."/>
            <person name="Ernst U."/>
            <person name="Wellenreuther R."/>
            <person name="Mehrle A."/>
            <person name="Schuster C."/>
            <person name="Bahr A."/>
            <person name="Bloecker H."/>
            <person name="Heubner D."/>
            <person name="Hoerlein A."/>
            <person name="Michel G."/>
            <person name="Wedler H."/>
            <person name="Koehrer K."/>
            <person name="Ottenwaelder B."/>
            <person name="Poustka A."/>
            <person name="Wiemann S."/>
            <person name="Schupp I."/>
        </authorList>
    </citation>
    <scope>NUCLEOTIDE SEQUENCE [LARGE SCALE MRNA] (ISOFORM 2)</scope>
    <source>
        <tissue>Uterine endothelium</tissue>
    </source>
</reference>
<reference key="3">
    <citation type="journal article" date="2005" name="Nature">
        <title>Generation and annotation of the DNA sequences of human chromosomes 2 and 4.</title>
        <authorList>
            <person name="Hillier L.W."/>
            <person name="Graves T.A."/>
            <person name="Fulton R.S."/>
            <person name="Fulton L.A."/>
            <person name="Pepin K.H."/>
            <person name="Minx P."/>
            <person name="Wagner-McPherson C."/>
            <person name="Layman D."/>
            <person name="Wylie K."/>
            <person name="Sekhon M."/>
            <person name="Becker M.C."/>
            <person name="Fewell G.A."/>
            <person name="Delehaunty K.D."/>
            <person name="Miner T.L."/>
            <person name="Nash W.E."/>
            <person name="Kremitzki C."/>
            <person name="Oddy L."/>
            <person name="Du H."/>
            <person name="Sun H."/>
            <person name="Bradshaw-Cordum H."/>
            <person name="Ali J."/>
            <person name="Carter J."/>
            <person name="Cordes M."/>
            <person name="Harris A."/>
            <person name="Isak A."/>
            <person name="van Brunt A."/>
            <person name="Nguyen C."/>
            <person name="Du F."/>
            <person name="Courtney L."/>
            <person name="Kalicki J."/>
            <person name="Ozersky P."/>
            <person name="Abbott S."/>
            <person name="Armstrong J."/>
            <person name="Belter E.A."/>
            <person name="Caruso L."/>
            <person name="Cedroni M."/>
            <person name="Cotton M."/>
            <person name="Davidson T."/>
            <person name="Desai A."/>
            <person name="Elliott G."/>
            <person name="Erb T."/>
            <person name="Fronick C."/>
            <person name="Gaige T."/>
            <person name="Haakenson W."/>
            <person name="Haglund K."/>
            <person name="Holmes A."/>
            <person name="Harkins R."/>
            <person name="Kim K."/>
            <person name="Kruchowski S.S."/>
            <person name="Strong C.M."/>
            <person name="Grewal N."/>
            <person name="Goyea E."/>
            <person name="Hou S."/>
            <person name="Levy A."/>
            <person name="Martinka S."/>
            <person name="Mead K."/>
            <person name="McLellan M.D."/>
            <person name="Meyer R."/>
            <person name="Randall-Maher J."/>
            <person name="Tomlinson C."/>
            <person name="Dauphin-Kohlberg S."/>
            <person name="Kozlowicz-Reilly A."/>
            <person name="Shah N."/>
            <person name="Swearengen-Shahid S."/>
            <person name="Snider J."/>
            <person name="Strong J.T."/>
            <person name="Thompson J."/>
            <person name="Yoakum M."/>
            <person name="Leonard S."/>
            <person name="Pearman C."/>
            <person name="Trani L."/>
            <person name="Radionenko M."/>
            <person name="Waligorski J.E."/>
            <person name="Wang C."/>
            <person name="Rock S.M."/>
            <person name="Tin-Wollam A.-M."/>
            <person name="Maupin R."/>
            <person name="Latreille P."/>
            <person name="Wendl M.C."/>
            <person name="Yang S.-P."/>
            <person name="Pohl C."/>
            <person name="Wallis J.W."/>
            <person name="Spieth J."/>
            <person name="Bieri T.A."/>
            <person name="Berkowicz N."/>
            <person name="Nelson J.O."/>
            <person name="Osborne J."/>
            <person name="Ding L."/>
            <person name="Meyer R."/>
            <person name="Sabo A."/>
            <person name="Shotland Y."/>
            <person name="Sinha P."/>
            <person name="Wohldmann P.E."/>
            <person name="Cook L.L."/>
            <person name="Hickenbotham M.T."/>
            <person name="Eldred J."/>
            <person name="Williams D."/>
            <person name="Jones T.A."/>
            <person name="She X."/>
            <person name="Ciccarelli F.D."/>
            <person name="Izaurralde E."/>
            <person name="Taylor J."/>
            <person name="Schmutz J."/>
            <person name="Myers R.M."/>
            <person name="Cox D.R."/>
            <person name="Huang X."/>
            <person name="McPherson J.D."/>
            <person name="Mardis E.R."/>
            <person name="Clifton S.W."/>
            <person name="Warren W.C."/>
            <person name="Chinwalla A.T."/>
            <person name="Eddy S.R."/>
            <person name="Marra M.A."/>
            <person name="Ovcharenko I."/>
            <person name="Furey T.S."/>
            <person name="Miller W."/>
            <person name="Eichler E.E."/>
            <person name="Bork P."/>
            <person name="Suyama M."/>
            <person name="Torrents D."/>
            <person name="Waterston R.H."/>
            <person name="Wilson R.K."/>
        </authorList>
    </citation>
    <scope>NUCLEOTIDE SEQUENCE [LARGE SCALE GENOMIC DNA]</scope>
</reference>
<reference key="4">
    <citation type="journal article" date="2004" name="Genome Res.">
        <title>The status, quality, and expansion of the NIH full-length cDNA project: the Mammalian Gene Collection (MGC).</title>
        <authorList>
            <consortium name="The MGC Project Team"/>
        </authorList>
    </citation>
    <scope>NUCLEOTIDE SEQUENCE [LARGE SCALE MRNA] (ISOFORM 1)</scope>
    <source>
        <tissue>Testis</tissue>
    </source>
</reference>
<reference key="5">
    <citation type="journal article" date="2013" name="J. Proteome Res.">
        <title>Toward a comprehensive characterization of a human cancer cell phosphoproteome.</title>
        <authorList>
            <person name="Zhou H."/>
            <person name="Di Palma S."/>
            <person name="Preisinger C."/>
            <person name="Peng M."/>
            <person name="Polat A.N."/>
            <person name="Heck A.J."/>
            <person name="Mohammed S."/>
        </authorList>
    </citation>
    <scope>PHOSPHORYLATION [LARGE SCALE ANALYSIS] AT SER-233</scope>
    <scope>IDENTIFICATION BY MASS SPECTROMETRY [LARGE SCALE ANALYSIS]</scope>
    <source>
        <tissue>Erythroleukemia</tissue>
    </source>
</reference>
<reference key="6">
    <citation type="journal article" date="2013" name="PLoS ONE">
        <title>GSTCD and INTS12 regulation and expression in the human lung.</title>
        <authorList>
            <person name="Obeidat M."/>
            <person name="Miller S."/>
            <person name="Probert K."/>
            <person name="Billington C.K."/>
            <person name="Henry A.P."/>
            <person name="Hodge E."/>
            <person name="Nelson C.P."/>
            <person name="Stewart C.E."/>
            <person name="Swan C."/>
            <person name="Wain L.V."/>
            <person name="Artigas M.S."/>
            <person name="Melen E."/>
            <person name="Ushey K."/>
            <person name="Hao K."/>
            <person name="Lamontagne M."/>
            <person name="Bosse Y."/>
            <person name="Postma D.S."/>
            <person name="Tobin M.D."/>
            <person name="Sayers I."/>
            <person name="Hall I.P."/>
        </authorList>
    </citation>
    <scope>TISSUE SPECIFICITY</scope>
    <scope>SUBCELLULAR LOCATION</scope>
</reference>
<sequence length="633" mass="71079">MKAIKKSLTEEEYLYLDFSHQTEGCIFPLHTSVTLFLLSYCDCKIFKICLVVTKEVSRDSSLLRDDLIQDVEIQIISRQELPPIVQNCCLPAVVERSDNFCRAGLAVVLRHIIQKSYEADPLKKELLELLGFKKTCLKACAEVSQWTRLCELTIPLAIENFLRESSDQPPTIPVEILQLEKKLSEPVRVHNDDKLRRQKLKQQKADGVGPPLTKGKAKSKVHTQETSEGLDSSSKSLELKVAFSKLTVQEEPATTNREPSHIRKAKASDLPPLEHVFAEGLYFTLADIVLLPCIHHFLVIISRKFSEKLVEFPLLASWYQRIQEVPGVKTAASKCGIQFLHLPKLLTTSTEQHPNLCEVPGVEEQSDPLFIGGPRPTMAKLMEKGIEVMFSPHPCPTWTLDWNVLPAAVSPKEGKMSSDRALRKQQQLNNLVYVVTNQAKPGDRIVDFCSGGGHVGIVLAHMLPSCQVTLIENKELSLIRAKKRSDELGLSNIWFIQANMEYFTGMFNIGVALHACGVATDMVIEHCIKTRASFVTCPCCYGFIQNTSKFNFPKSEQFKKTLSYKEHMILCRFADQTAVQLPPQRRLIGKQCMCLVDLDRARAAEECGYSVQVISMEPESCSPKNNMIVGVPI</sequence>
<proteinExistence type="evidence at protein level"/>
<organism>
    <name type="scientific">Homo sapiens</name>
    <name type="common">Human</name>
    <dbReference type="NCBI Taxonomy" id="9606"/>
    <lineage>
        <taxon>Eukaryota</taxon>
        <taxon>Metazoa</taxon>
        <taxon>Chordata</taxon>
        <taxon>Craniata</taxon>
        <taxon>Vertebrata</taxon>
        <taxon>Euteleostomi</taxon>
        <taxon>Mammalia</taxon>
        <taxon>Eutheria</taxon>
        <taxon>Euarchontoglires</taxon>
        <taxon>Primates</taxon>
        <taxon>Haplorrhini</taxon>
        <taxon>Catarrhini</taxon>
        <taxon>Hominidae</taxon>
        <taxon>Homo</taxon>
    </lineage>
</organism>
<gene>
    <name type="primary">GSTCD</name>
</gene>
<comment type="interaction">
    <interactant intactId="EBI-8469616">
        <id>Q8NEC7</id>
    </interactant>
    <interactant intactId="EBI-710124">
        <id>O60341</id>
        <label>KDM1A</label>
    </interactant>
    <organismsDiffer>false</organismsDiffer>
    <experiments>2</experiments>
</comment>
<comment type="interaction">
    <interactant intactId="EBI-8469616">
        <id>Q8NEC7</id>
    </interactant>
    <interactant intactId="EBI-912440">
        <id>Q96LA8</id>
        <label>PRMT6</label>
    </interactant>
    <organismsDiffer>false</organismsDiffer>
    <experiments>2</experiments>
</comment>
<comment type="subcellular location">
    <subcellularLocation>
        <location evidence="2">Cytoplasm</location>
    </subcellularLocation>
</comment>
<comment type="alternative products">
    <event type="alternative splicing"/>
    <isoform>
        <id>Q8NEC7-1</id>
        <name>1</name>
        <sequence type="displayed"/>
    </isoform>
    <isoform>
        <id>Q8NEC7-3</id>
        <name>2</name>
        <sequence type="described" ref="VSP_045228"/>
    </isoform>
</comment>
<comment type="tissue specificity">
    <text evidence="2">Widely expressed in cell types relevant to airway function, including airway smooth muscle cells and epithelial cells.</text>
</comment>
<comment type="similarity">
    <text evidence="4">Belongs to the GSTCD family.</text>
</comment>
<comment type="sequence caution" evidence="4">
    <conflict type="miscellaneous discrepancy">
        <sequence resource="EMBL-CDS" id="BAB14532"/>
    </conflict>
    <text>Intron retention.</text>
</comment>
<comment type="sequence caution" evidence="4">
    <conflict type="frameshift">
        <sequence resource="EMBL" id="BX648355"/>
    </conflict>
</comment>
<evidence type="ECO:0000256" key="1">
    <source>
        <dbReference type="SAM" id="MobiDB-lite"/>
    </source>
</evidence>
<evidence type="ECO:0000269" key="2">
    <source>
    </source>
</evidence>
<evidence type="ECO:0000303" key="3">
    <source>
    </source>
</evidence>
<evidence type="ECO:0000305" key="4"/>
<evidence type="ECO:0007744" key="5">
    <source>
    </source>
</evidence>
<feature type="chain" id="PRO_0000316952" description="Glutathione S-transferase C-terminal domain-containing protein">
    <location>
        <begin position="1"/>
        <end position="633"/>
    </location>
</feature>
<feature type="domain" description="GST C-terminal">
    <location>
        <begin position="130"/>
        <end position="332"/>
    </location>
</feature>
<feature type="region of interest" description="Disordered" evidence="1">
    <location>
        <begin position="191"/>
        <end position="233"/>
    </location>
</feature>
<feature type="compositionally biased region" description="Polar residues" evidence="1">
    <location>
        <begin position="224"/>
        <end position="233"/>
    </location>
</feature>
<feature type="modified residue" description="Phosphoserine" evidence="5">
    <location>
        <position position="233"/>
    </location>
</feature>
<feature type="splice variant" id="VSP_045228" description="In isoform 2." evidence="3">
    <location>
        <begin position="55"/>
        <end position="141"/>
    </location>
</feature>
<feature type="sequence conflict" description="In Ref. 1; BAF85044." evidence="4" ref="1">
    <original>E</original>
    <variation>G</variation>
    <location>
        <position position="10"/>
    </location>
</feature>
<feature type="sequence conflict" description="In Ref. 1; BAB14532." evidence="4" ref="1">
    <original>Q</original>
    <variation>R</variation>
    <location>
        <position position="74"/>
    </location>
</feature>
<feature type="sequence conflict" description="In Ref. 4; AAH32942." evidence="4" ref="4">
    <location>
        <position position="331"/>
    </location>
</feature>
<feature type="sequence conflict" description="In Ref. 1; BAF85044." evidence="4" ref="1">
    <original>K</original>
    <variation>R</variation>
    <location>
        <position position="415"/>
    </location>
</feature>
<feature type="sequence conflict" description="In Ref. 2; BX648355." evidence="4" ref="2">
    <original>K</original>
    <variation>R</variation>
    <location>
        <position position="474"/>
    </location>
</feature>
<protein>
    <recommendedName>
        <fullName>Glutathione S-transferase C-terminal domain-containing protein</fullName>
    </recommendedName>
</protein>
<keyword id="KW-0025">Alternative splicing</keyword>
<keyword id="KW-0963">Cytoplasm</keyword>
<keyword id="KW-0597">Phosphoprotein</keyword>
<keyword id="KW-1267">Proteomics identification</keyword>
<keyword id="KW-1185">Reference proteome</keyword>
<dbReference type="EMBL" id="AK023335">
    <property type="protein sequence ID" value="BAB14532.1"/>
    <property type="status" value="ALT_SEQ"/>
    <property type="molecule type" value="mRNA"/>
</dbReference>
<dbReference type="EMBL" id="AK292355">
    <property type="protein sequence ID" value="BAF85044.1"/>
    <property type="molecule type" value="mRNA"/>
</dbReference>
<dbReference type="EMBL" id="BX648355">
    <property type="status" value="NOT_ANNOTATED_CDS"/>
    <property type="molecule type" value="mRNA"/>
</dbReference>
<dbReference type="EMBL" id="AC008243">
    <property type="status" value="NOT_ANNOTATED_CDS"/>
    <property type="molecule type" value="Genomic_DNA"/>
</dbReference>
<dbReference type="EMBL" id="AC105391">
    <property type="status" value="NOT_ANNOTATED_CDS"/>
    <property type="molecule type" value="Genomic_DNA"/>
</dbReference>
<dbReference type="EMBL" id="BC032942">
    <property type="protein sequence ID" value="AAH32942.1"/>
    <property type="molecule type" value="mRNA"/>
</dbReference>
<dbReference type="CCDS" id="CCDS3672.2">
    <molecule id="Q8NEC7-3"/>
</dbReference>
<dbReference type="CCDS" id="CCDS43257.1">
    <molecule id="Q8NEC7-1"/>
</dbReference>
<dbReference type="RefSeq" id="NP_001026890.2">
    <molecule id="Q8NEC7-1"/>
    <property type="nucleotide sequence ID" value="NM_001031720.3"/>
</dbReference>
<dbReference type="RefSeq" id="NP_001357110.1">
    <molecule id="Q8NEC7-1"/>
    <property type="nucleotide sequence ID" value="NM_001370181.1"/>
</dbReference>
<dbReference type="RefSeq" id="NP_079027.2">
    <molecule id="Q8NEC7-3"/>
    <property type="nucleotide sequence ID" value="NM_024751.3"/>
</dbReference>
<dbReference type="RefSeq" id="XP_005263279.1">
    <property type="nucleotide sequence ID" value="XM_005263222.3"/>
</dbReference>
<dbReference type="RefSeq" id="XP_011530550.1">
    <molecule id="Q8NEC7-1"/>
    <property type="nucleotide sequence ID" value="XM_011532248.4"/>
</dbReference>
<dbReference type="RefSeq" id="XP_011530551.1">
    <molecule id="Q8NEC7-1"/>
    <property type="nucleotide sequence ID" value="XM_011532249.4"/>
</dbReference>
<dbReference type="RefSeq" id="XP_011530554.1">
    <molecule id="Q8NEC7-1"/>
    <property type="nucleotide sequence ID" value="XM_011532252.4"/>
</dbReference>
<dbReference type="RefSeq" id="XP_047272135.1">
    <molecule id="Q8NEC7-3"/>
    <property type="nucleotide sequence ID" value="XM_047416179.1"/>
</dbReference>
<dbReference type="RefSeq" id="XP_054206817.1">
    <molecule id="Q8NEC7-1"/>
    <property type="nucleotide sequence ID" value="XM_054350842.1"/>
</dbReference>
<dbReference type="RefSeq" id="XP_054206818.1">
    <molecule id="Q8NEC7-1"/>
    <property type="nucleotide sequence ID" value="XM_054350843.1"/>
</dbReference>
<dbReference type="RefSeq" id="XP_054206819.1">
    <molecule id="Q8NEC7-1"/>
    <property type="nucleotide sequence ID" value="XM_054350844.1"/>
</dbReference>
<dbReference type="RefSeq" id="XP_054206820.1">
    <molecule id="Q8NEC7-3"/>
    <property type="nucleotide sequence ID" value="XM_054350845.1"/>
</dbReference>
<dbReference type="BioGRID" id="122903">
    <property type="interactions" value="27"/>
</dbReference>
<dbReference type="FunCoup" id="Q8NEC7">
    <property type="interactions" value="1692"/>
</dbReference>
<dbReference type="IntAct" id="Q8NEC7">
    <property type="interactions" value="22"/>
</dbReference>
<dbReference type="MINT" id="Q8NEC7"/>
<dbReference type="STRING" id="9606.ENSP00000422354"/>
<dbReference type="iPTMnet" id="Q8NEC7"/>
<dbReference type="PhosphoSitePlus" id="Q8NEC7"/>
<dbReference type="BioMuta" id="GSTCD"/>
<dbReference type="DMDM" id="167008865"/>
<dbReference type="jPOST" id="Q8NEC7"/>
<dbReference type="MassIVE" id="Q8NEC7"/>
<dbReference type="PaxDb" id="9606-ENSP00000422354"/>
<dbReference type="PeptideAtlas" id="Q8NEC7"/>
<dbReference type="ProteomicsDB" id="46244"/>
<dbReference type="ProteomicsDB" id="73150">
    <molecule id="Q8NEC7-1"/>
</dbReference>
<dbReference type="Pumba" id="Q8NEC7"/>
<dbReference type="Antibodypedia" id="26176">
    <property type="antibodies" value="97 antibodies from 21 providers"/>
</dbReference>
<dbReference type="DNASU" id="79807"/>
<dbReference type="Ensembl" id="ENST00000360505.9">
    <molecule id="Q8NEC7-1"/>
    <property type="protein sequence ID" value="ENSP00000353695.5"/>
    <property type="gene ID" value="ENSG00000138780.15"/>
</dbReference>
<dbReference type="Ensembl" id="ENST00000394728.4">
    <molecule id="Q8NEC7-1"/>
    <property type="protein sequence ID" value="ENSP00000378216.3"/>
    <property type="gene ID" value="ENSG00000138780.15"/>
</dbReference>
<dbReference type="Ensembl" id="ENST00000394730.7">
    <molecule id="Q8NEC7-3"/>
    <property type="protein sequence ID" value="ENSP00000378218.3"/>
    <property type="gene ID" value="ENSG00000138780.15"/>
</dbReference>
<dbReference type="Ensembl" id="ENST00000515279.6">
    <molecule id="Q8NEC7-1"/>
    <property type="protein sequence ID" value="ENSP00000422354.1"/>
    <property type="gene ID" value="ENSG00000138780.15"/>
</dbReference>
<dbReference type="GeneID" id="79807"/>
<dbReference type="KEGG" id="hsa:79807"/>
<dbReference type="MANE-Select" id="ENST00000515279.6">
    <property type="protein sequence ID" value="ENSP00000422354.1"/>
    <property type="RefSeq nucleotide sequence ID" value="NM_001370181.1"/>
    <property type="RefSeq protein sequence ID" value="NP_001357110.1"/>
</dbReference>
<dbReference type="UCSC" id="uc003hxy.4">
    <molecule id="Q8NEC7-1"/>
    <property type="organism name" value="human"/>
</dbReference>
<dbReference type="AGR" id="HGNC:25806"/>
<dbReference type="CTD" id="79807"/>
<dbReference type="DisGeNET" id="79807"/>
<dbReference type="GeneCards" id="GSTCD"/>
<dbReference type="HGNC" id="HGNC:25806">
    <property type="gene designation" value="GSTCD"/>
</dbReference>
<dbReference type="HPA" id="ENSG00000138780">
    <property type="expression patterns" value="Low tissue specificity"/>
</dbReference>
<dbReference type="MIM" id="615912">
    <property type="type" value="gene"/>
</dbReference>
<dbReference type="neXtProt" id="NX_Q8NEC7"/>
<dbReference type="OpenTargets" id="ENSG00000138780"/>
<dbReference type="PharmGKB" id="PA144596427"/>
<dbReference type="VEuPathDB" id="HostDB:ENSG00000138780"/>
<dbReference type="eggNOG" id="ENOG502QUFE">
    <property type="taxonomic scope" value="Eukaryota"/>
</dbReference>
<dbReference type="GeneTree" id="ENSGT00390000004446"/>
<dbReference type="HOGENOM" id="CLU_013673_1_0_1"/>
<dbReference type="InParanoid" id="Q8NEC7"/>
<dbReference type="OMA" id="WTRFCEV"/>
<dbReference type="OrthoDB" id="206598at2759"/>
<dbReference type="PAN-GO" id="Q8NEC7">
    <property type="GO annotations" value="1 GO annotation based on evolutionary models"/>
</dbReference>
<dbReference type="PhylomeDB" id="Q8NEC7"/>
<dbReference type="TreeFam" id="TF324238"/>
<dbReference type="PathwayCommons" id="Q8NEC7"/>
<dbReference type="SignaLink" id="Q8NEC7"/>
<dbReference type="BioGRID-ORCS" id="79807">
    <property type="hits" value="16 hits in 1153 CRISPR screens"/>
</dbReference>
<dbReference type="ChiTaRS" id="GSTCD">
    <property type="organism name" value="human"/>
</dbReference>
<dbReference type="GenomeRNAi" id="79807"/>
<dbReference type="Pharos" id="Q8NEC7">
    <property type="development level" value="Tbio"/>
</dbReference>
<dbReference type="PRO" id="PR:Q8NEC7"/>
<dbReference type="Proteomes" id="UP000005640">
    <property type="component" value="Chromosome 4"/>
</dbReference>
<dbReference type="RNAct" id="Q8NEC7">
    <property type="molecule type" value="protein"/>
</dbReference>
<dbReference type="Bgee" id="ENSG00000138780">
    <property type="expression patterns" value="Expressed in sperm and 162 other cell types or tissues"/>
</dbReference>
<dbReference type="ExpressionAtlas" id="Q8NEC7">
    <property type="expression patterns" value="baseline and differential"/>
</dbReference>
<dbReference type="GO" id="GO:0005737">
    <property type="term" value="C:cytoplasm"/>
    <property type="evidence" value="ECO:0000314"/>
    <property type="project" value="UniProtKB"/>
</dbReference>
<dbReference type="GO" id="GO:0070062">
    <property type="term" value="C:extracellular exosome"/>
    <property type="evidence" value="ECO:0007005"/>
    <property type="project" value="UniProtKB"/>
</dbReference>
<dbReference type="GO" id="GO:0060541">
    <property type="term" value="P:respiratory system development"/>
    <property type="evidence" value="ECO:0007669"/>
    <property type="project" value="Ensembl"/>
</dbReference>
<dbReference type="GO" id="GO:0032496">
    <property type="term" value="P:response to lipopolysaccharide"/>
    <property type="evidence" value="ECO:0007669"/>
    <property type="project" value="Ensembl"/>
</dbReference>
<dbReference type="FunFam" id="3.40.50.150:FF:000125">
    <property type="entry name" value="Glutathione S-transferase C-terminal domain-containing protein"/>
    <property type="match status" value="1"/>
</dbReference>
<dbReference type="Gene3D" id="1.20.1050.10">
    <property type="match status" value="1"/>
</dbReference>
<dbReference type="Gene3D" id="3.40.50.150">
    <property type="entry name" value="Vaccinia Virus protein VP39"/>
    <property type="match status" value="1"/>
</dbReference>
<dbReference type="InterPro" id="IPR010987">
    <property type="entry name" value="Glutathione-S-Trfase_C-like"/>
</dbReference>
<dbReference type="InterPro" id="IPR036282">
    <property type="entry name" value="Glutathione-S-Trfase_C_sf"/>
</dbReference>
<dbReference type="InterPro" id="IPR025714">
    <property type="entry name" value="Methyltranfer_dom"/>
</dbReference>
<dbReference type="InterPro" id="IPR029063">
    <property type="entry name" value="SAM-dependent_MTases_sf"/>
</dbReference>
<dbReference type="PANTHER" id="PTHR13369">
    <property type="match status" value="1"/>
</dbReference>
<dbReference type="PANTHER" id="PTHR13369:SF0">
    <property type="entry name" value="GLUTATHIONE S-TRANSFERASE C-TERMINAL DOMAIN-CONTAINING PROTEIN"/>
    <property type="match status" value="1"/>
</dbReference>
<dbReference type="Pfam" id="PF13679">
    <property type="entry name" value="Methyltransf_32"/>
    <property type="match status" value="1"/>
</dbReference>
<dbReference type="SUPFAM" id="SSF47616">
    <property type="entry name" value="GST C-terminal domain-like"/>
    <property type="match status" value="1"/>
</dbReference>
<dbReference type="SUPFAM" id="SSF53335">
    <property type="entry name" value="S-adenosyl-L-methionine-dependent methyltransferases"/>
    <property type="match status" value="1"/>
</dbReference>
<dbReference type="PROSITE" id="PS50405">
    <property type="entry name" value="GST_CTER"/>
    <property type="match status" value="1"/>
</dbReference>
<accession>Q8NEC7</accession>
<accession>A8K8J0</accession>
<accession>A8MVD3</accession>
<accession>H9KV97</accession>
<accession>Q9H8S3</accession>
<name>GSTCD_HUMAN</name>